<comment type="function">
    <text evidence="1 3 5">Lipid transfer protein required for autophagosomes completion and peroxisome degradation (PubMed:16303567, PubMed:30911189). Tethers the edge of the isolation membrane (IM) to the endoplasmic reticulum (ER) and mediates direct lipid transfer from ER to IM for IM expansion (PubMed:30911189). Atg2 binds to the ER exit site (ERES), which is the membrane source for autophagosome formation, using basic residues in its N-terminal region (NR) and to the expanding edge of the IM through its C-terminal region (PubMed:30911189). The latter binding is assisted by an atg18-PtdIns3P interaction (PubMed:30911189). Atg2 then extracts phospholipids from the membrane source using its NR and transfers them to atg9 to the IM through its predicted beta-sheet-rich structure for membrane expansion (PubMed:30911189). Atg2 is also involved in the recruitment of lipids to a restricted region close to the vacuole, termed the vacuole-isolation membrane contact site (VICS), which is also essential for autophagosome formation (By similarity). May have a role in sporulation (PubMed:16303567).</text>
</comment>
<comment type="catalytic activity">
    <reaction evidence="5">
        <text>a 1,2-diacyl-sn-glycero-3-phosphocholine(in) = a 1,2-diacyl-sn-glycero-3-phosphocholine(out)</text>
        <dbReference type="Rhea" id="RHEA:38571"/>
        <dbReference type="ChEBI" id="CHEBI:57643"/>
    </reaction>
</comment>
<comment type="catalytic activity">
    <reaction evidence="5">
        <text>a 1,2-diacyl-sn-glycero-3-phospho-L-serine(in) = a 1,2-diacyl-sn-glycero-3-phospho-L-serine(out)</text>
        <dbReference type="Rhea" id="RHEA:38663"/>
        <dbReference type="ChEBI" id="CHEBI:57262"/>
    </reaction>
</comment>
<comment type="catalytic activity">
    <reaction evidence="5">
        <text>a 1,2-diacyl-sn-glycero-3-phosphoethanolamine(in) = a 1,2-diacyl-sn-glycero-3-phosphoethanolamine(out)</text>
        <dbReference type="Rhea" id="RHEA:38895"/>
        <dbReference type="ChEBI" id="CHEBI:64612"/>
    </reaction>
</comment>
<comment type="subcellular location">
    <subcellularLocation>
        <location evidence="4">Preautophagosomal structure membrane</location>
        <topology evidence="4">Peripheral membrane protein</topology>
    </subcellularLocation>
    <subcellularLocation>
        <location evidence="1">Endoplasmic reticulum membrane</location>
        <topology evidence="1">Peripheral membrane protein</topology>
    </subcellularLocation>
    <text evidence="1">Localizes to the IM-ERES contact site.</text>
</comment>
<comment type="domain">
    <text evidence="5">The N-terminal region (NR) associates with the endoplasmic reticulum (ER) and is responsible for the formation of the isolation membrane at the PAS.</text>
</comment>
<comment type="domain">
    <text evidence="5">The amphipathic helix in the C-terminal region binds to membranes and facilitates atg18 binding to PtdIns3P to target the atg2-atg18 complex to the PAS.</text>
</comment>
<comment type="disruption phenotype">
    <text evidence="4">Impairs atg8-processing.</text>
</comment>
<comment type="similarity">
    <text evidence="6">Belongs to the ATG2 family.</text>
</comment>
<feature type="chain" id="PRO_0000297691" description="Autophagy-related protein 2">
    <location>
        <begin position="1"/>
        <end position="1646"/>
    </location>
</feature>
<feature type="domain" description="Chorein N-terminal" evidence="2">
    <location>
        <begin position="26"/>
        <end position="121"/>
    </location>
</feature>
<feature type="region of interest" description="ER-targeting domain" evidence="7">
    <location>
        <begin position="16"/>
        <end position="35"/>
    </location>
</feature>
<feature type="region of interest" description="PAS-targeting domain" evidence="7">
    <location>
        <begin position="1465"/>
        <end position="1490"/>
    </location>
</feature>
<feature type="helix" evidence="10">
    <location>
        <begin position="21"/>
        <end position="39"/>
    </location>
</feature>
<feature type="strand" evidence="10">
    <location>
        <begin position="40"/>
        <end position="42"/>
    </location>
</feature>
<feature type="helix" evidence="10">
    <location>
        <begin position="46"/>
        <end position="54"/>
    </location>
</feature>
<feature type="strand" evidence="10">
    <location>
        <begin position="55"/>
        <end position="62"/>
    </location>
</feature>
<feature type="helix" evidence="10">
    <location>
        <begin position="67"/>
        <end position="73"/>
    </location>
</feature>
<feature type="strand" evidence="10">
    <location>
        <begin position="80"/>
        <end position="93"/>
    </location>
</feature>
<feature type="helix" evidence="10">
    <location>
        <begin position="95"/>
        <end position="97"/>
    </location>
</feature>
<feature type="strand" evidence="10">
    <location>
        <begin position="98"/>
        <end position="100"/>
    </location>
</feature>
<feature type="strand" evidence="10">
    <location>
        <begin position="103"/>
        <end position="115"/>
    </location>
</feature>
<feature type="helix" evidence="10">
    <location>
        <begin position="139"/>
        <end position="148"/>
    </location>
</feature>
<feature type="helix" evidence="10">
    <location>
        <begin position="150"/>
        <end position="160"/>
    </location>
</feature>
<feature type="helix" evidence="10">
    <location>
        <begin position="174"/>
        <end position="184"/>
    </location>
</feature>
<feature type="strand" evidence="10">
    <location>
        <begin position="185"/>
        <end position="196"/>
    </location>
</feature>
<feature type="strand" evidence="10">
    <location>
        <begin position="205"/>
        <end position="216"/>
    </location>
</feature>
<feature type="strand" evidence="10">
    <location>
        <begin position="224"/>
        <end position="229"/>
    </location>
</feature>
<feature type="strand" evidence="10">
    <location>
        <begin position="232"/>
        <end position="234"/>
    </location>
</feature>
<dbReference type="EMBL" id="CU329671">
    <property type="protein sequence ID" value="CAA22538.2"/>
    <property type="molecule type" value="Genomic_DNA"/>
</dbReference>
<dbReference type="PIR" id="T40198">
    <property type="entry name" value="T40198"/>
</dbReference>
<dbReference type="RefSeq" id="XP_001713120.1">
    <property type="nucleotide sequence ID" value="XM_001713068.2"/>
</dbReference>
<dbReference type="PDB" id="6A9E">
    <property type="method" value="X-ray"/>
    <property type="resolution" value="3.21 A"/>
    <property type="chains" value="A/B=21-240"/>
</dbReference>
<dbReference type="PDB" id="6A9J">
    <property type="method" value="X-ray"/>
    <property type="resolution" value="2.70 A"/>
    <property type="chains" value="A/B=21-240"/>
</dbReference>
<dbReference type="PDBsum" id="6A9E"/>
<dbReference type="PDBsum" id="6A9J"/>
<dbReference type="SMR" id="O94649"/>
<dbReference type="BioGRID" id="280290">
    <property type="interactions" value="2"/>
</dbReference>
<dbReference type="FunCoup" id="O94649">
    <property type="interactions" value="233"/>
</dbReference>
<dbReference type="STRING" id="284812.O94649"/>
<dbReference type="iPTMnet" id="O94649"/>
<dbReference type="PaxDb" id="4896-SPBC31E1.01c.1"/>
<dbReference type="EnsemblFungi" id="SPBC31E1.01c.1">
    <property type="protein sequence ID" value="SPBC31E1.01c.1:pep"/>
    <property type="gene ID" value="SPBC31E1.01c"/>
</dbReference>
<dbReference type="PomBase" id="SPBC31E1.01c">
    <property type="gene designation" value="atg2"/>
</dbReference>
<dbReference type="VEuPathDB" id="FungiDB:SPBC31E1.01c"/>
<dbReference type="eggNOG" id="KOG2993">
    <property type="taxonomic scope" value="Eukaryota"/>
</dbReference>
<dbReference type="HOGENOM" id="CLU_244286_0_0_1"/>
<dbReference type="InParanoid" id="O94649"/>
<dbReference type="OMA" id="DLGYEHY"/>
<dbReference type="PRO" id="PR:O94649"/>
<dbReference type="Proteomes" id="UP000002485">
    <property type="component" value="Chromosome II"/>
</dbReference>
<dbReference type="GO" id="GO:0005789">
    <property type="term" value="C:endoplasmic reticulum membrane"/>
    <property type="evidence" value="ECO:0007669"/>
    <property type="project" value="UniProtKB-SubCell"/>
</dbReference>
<dbReference type="GO" id="GO:0061908">
    <property type="term" value="C:phagophore"/>
    <property type="evidence" value="ECO:0000314"/>
    <property type="project" value="PomBase"/>
</dbReference>
<dbReference type="GO" id="GO:0000407">
    <property type="term" value="C:phagophore assembly site"/>
    <property type="evidence" value="ECO:0000314"/>
    <property type="project" value="PomBase"/>
</dbReference>
<dbReference type="GO" id="GO:0034045">
    <property type="term" value="C:phagophore assembly site membrane"/>
    <property type="evidence" value="ECO:0007669"/>
    <property type="project" value="UniProtKB-SubCell"/>
</dbReference>
<dbReference type="GO" id="GO:0120013">
    <property type="term" value="F:lipid transfer activity"/>
    <property type="evidence" value="ECO:0000304"/>
    <property type="project" value="PomBase"/>
</dbReference>
<dbReference type="GO" id="GO:0032266">
    <property type="term" value="F:phosphatidylinositol-3-phosphate binding"/>
    <property type="evidence" value="ECO:0000318"/>
    <property type="project" value="GO_Central"/>
</dbReference>
<dbReference type="GO" id="GO:0043495">
    <property type="term" value="F:protein-membrane adaptor activity"/>
    <property type="evidence" value="ECO:0000269"/>
    <property type="project" value="PomBase"/>
</dbReference>
<dbReference type="GO" id="GO:0000045">
    <property type="term" value="P:autophagosome assembly"/>
    <property type="evidence" value="ECO:0000318"/>
    <property type="project" value="GO_Central"/>
</dbReference>
<dbReference type="GO" id="GO:0000422">
    <property type="term" value="P:autophagy of mitochondrion"/>
    <property type="evidence" value="ECO:0000318"/>
    <property type="project" value="GO_Central"/>
</dbReference>
<dbReference type="GO" id="GO:0061723">
    <property type="term" value="P:glycophagy"/>
    <property type="evidence" value="ECO:0000318"/>
    <property type="project" value="GO_Central"/>
</dbReference>
<dbReference type="GO" id="GO:0120010">
    <property type="term" value="P:intermembrane phospholipid transfer"/>
    <property type="evidence" value="ECO:0000304"/>
    <property type="project" value="PomBase"/>
</dbReference>
<dbReference type="GO" id="GO:0016236">
    <property type="term" value="P:macroautophagy"/>
    <property type="evidence" value="ECO:0000315"/>
    <property type="project" value="PomBase"/>
</dbReference>
<dbReference type="GO" id="GO:0051321">
    <property type="term" value="P:meiotic cell cycle"/>
    <property type="evidence" value="ECO:0007669"/>
    <property type="project" value="UniProtKB-KW"/>
</dbReference>
<dbReference type="GO" id="GO:0000425">
    <property type="term" value="P:pexophagy"/>
    <property type="evidence" value="ECO:0000318"/>
    <property type="project" value="GO_Central"/>
</dbReference>
<dbReference type="GO" id="GO:0034727">
    <property type="term" value="P:piecemeal microautophagy of the nucleus"/>
    <property type="evidence" value="ECO:0000318"/>
    <property type="project" value="GO_Central"/>
</dbReference>
<dbReference type="GO" id="GO:2000786">
    <property type="term" value="P:positive regulation of autophagosome assembly"/>
    <property type="evidence" value="ECO:0000269"/>
    <property type="project" value="PomBase"/>
</dbReference>
<dbReference type="GO" id="GO:0061709">
    <property type="term" value="P:reticulophagy"/>
    <property type="evidence" value="ECO:0000318"/>
    <property type="project" value="GO_Central"/>
</dbReference>
<dbReference type="GO" id="GO:0030435">
    <property type="term" value="P:sporulation resulting in formation of a cellular spore"/>
    <property type="evidence" value="ECO:0007669"/>
    <property type="project" value="UniProtKB-KW"/>
</dbReference>
<dbReference type="InterPro" id="IPR026849">
    <property type="entry name" value="ATG2"/>
</dbReference>
<dbReference type="PANTHER" id="PTHR13190">
    <property type="entry name" value="AUTOPHAGY-RELATED 2, ISOFORM A"/>
    <property type="match status" value="1"/>
</dbReference>
<dbReference type="PANTHER" id="PTHR13190:SF1">
    <property type="entry name" value="AUTOPHAGY-RELATED 2, ISOFORM A"/>
    <property type="match status" value="1"/>
</dbReference>
<dbReference type="Pfam" id="PF13329">
    <property type="entry name" value="ATG2_CAD"/>
    <property type="match status" value="1"/>
</dbReference>
<proteinExistence type="evidence at protein level"/>
<sequence length="1646" mass="184308">MRLPSWLKNSSSWLWTAALSRTVQRRLLAFALRKLIGSILLENVQPEDIDILFSKGVLMLSNLQLNCSFLNAVVSLPMINFTKGTLRRLILRLNVTDIVNLNVELEVNGLSLEIELVPPDESLSSTTYEDAPSQLDILDNVVEYMNKTASQDFEDEVINEGLESEIDGSSHNLLDSILQKCLASTSVLMQDALVYIGTANMSTRLEAKLDFMSFSSVKSNSTSRLLNINGITVSMVRPISKSNAGSSSPPRSEESFVSMDSSSSIVEGFENDLSPSQVTLNESSIISSNREEESFYSVHDSVTQKKTRTSWLIFQCSGEFRLVFSIESSNLLVIESHVPSCVLNINSQVIAFLLYLYGYFLPAPSTPGFSSNKPPLTMLQLDIHISSVQILTHCKLPESQDFSMHNDVDELLHTIPSNGAVFEMKINQIQIFNDNNDIDELTMTFSDLDIFMDSVTLVSFGKSLQSPCSLIFKKLERIVSLFIHIPGGEISLPLGKALLLQESFVEFTNDISNLQNFLSNSDPFKRSIQETFEAPKPFEVEMNQPSFEIIALFDELQLQILNELSTQSLYKLTLRVSHLQFTRKSTGSLSSVLIFVKKIGCQSELFNCENSDWTKVSSSTAFHLSNSLFETHDTTGTSNFAVSIQQEKHYYPVFQPAPTEFSYPEKHFYFAVDNFNVFISKEVVRLFKTLYETIASSLVTPVTPNKLVTSDYKNVLKIRTRTFSLSLLNDDGSSFALKCIRIKHYMCWAGAQLISLSLRLYNVSAEYLSESLEILPVVSFIRNLRNDEKYLLNADFSYALKRSSGSNDNTIFVKITDLGYEHYPTCPWISDLLKTYFPQDPEVPFLAFPDFPFNIKLDLRESIIGLNPRTLEAKLLLYLKSLDVEIDALVASNPLNIRIMAAETVVYIIDKLNQSVLEGKTSVLKREILNSSLHFPGLSIKDTIEFVVKSLGYVEISQLKNLTLSLVVNAEEGVFSTLITVDNLDAQVQSCADSTELLIKVLSDLGSTEDEEISDCYLALPIEDYAKSLTEVDYNFFENRGIDYKSNPTEQSTVLVSSDNDISSQEIKIVDDYYISSNEHSTHASDLASVSSEEFVIDDGSSSIIDISDELQDESSSRDSLKKGIELIEDYYLSQSTSKLESSVEGKNYLLKVKFKDINVNWDLHDGYDWEATRATISSAIEKLCDSSSQNDKISPEAKTLLFQSIVIKSFSKVGRLNINHVSEPIDSDEFADYLSKSISYHLRLGKSKSKKIGIEIKDLQGSFTVYADSNEPNAVLNDLDIGLKDLIIYDHLSTSTWNKFFGRDSRSPSSKNRNQHMNAQIVTVRPLPELNNRELRLEFSVLPCKMYIDQDTLDFLIRFLTFQTPSSSETLNTEPDLPFFQSICINATHVTIDFKFKSADKVGLRSGKLPDLGSLIVMQGSEVFLRQLQIYGLSGAEEFLNALLNVWLQDIRNNQLSKVLNGVVPIRTMFTVGRGIKDIFVSPVRGLQGNHSVGSFRHGIIKFTEKYVNDFLSLNAQGATGTHSLLRQAESYLERGSNASASASRARSYYAEQPETIEQGLRQGYSGLKQGLLGAKSTLMGLPRETRSHKSLGGVAQTVGRKVPLIVLQPMIGATEAVSKTLLGLSNSLQPQRRQDMREKYKRPG</sequence>
<protein>
    <recommendedName>
        <fullName>Autophagy-related protein 2</fullName>
    </recommendedName>
    <alternativeName>
        <fullName>Meiotically up-regulated gene 36 protein</fullName>
    </alternativeName>
</protein>
<accession>O94649</accession>
<accession>O94434</accession>
<keyword id="KW-0002">3D-structure</keyword>
<keyword id="KW-0072">Autophagy</keyword>
<keyword id="KW-0256">Endoplasmic reticulum</keyword>
<keyword id="KW-0445">Lipid transport</keyword>
<keyword id="KW-0469">Meiosis</keyword>
<keyword id="KW-0472">Membrane</keyword>
<keyword id="KW-1185">Reference proteome</keyword>
<keyword id="KW-0749">Sporulation</keyword>
<keyword id="KW-0813">Transport</keyword>
<gene>
    <name type="primary">atg2</name>
    <name type="synonym">mug36</name>
    <name type="ORF">SPBC31E1.01c</name>
    <name type="ORF">SPBC660.18c</name>
</gene>
<name>ATG2_SCHPO</name>
<organism>
    <name type="scientific">Schizosaccharomyces pombe (strain 972 / ATCC 24843)</name>
    <name type="common">Fission yeast</name>
    <dbReference type="NCBI Taxonomy" id="284812"/>
    <lineage>
        <taxon>Eukaryota</taxon>
        <taxon>Fungi</taxon>
        <taxon>Dikarya</taxon>
        <taxon>Ascomycota</taxon>
        <taxon>Taphrinomycotina</taxon>
        <taxon>Schizosaccharomycetes</taxon>
        <taxon>Schizosaccharomycetales</taxon>
        <taxon>Schizosaccharomycetaceae</taxon>
        <taxon>Schizosaccharomyces</taxon>
    </lineage>
</organism>
<evidence type="ECO:0000250" key="1">
    <source>
        <dbReference type="UniProtKB" id="P53855"/>
    </source>
</evidence>
<evidence type="ECO:0000255" key="2"/>
<evidence type="ECO:0000269" key="3">
    <source>
    </source>
</evidence>
<evidence type="ECO:0000269" key="4">
    <source>
    </source>
</evidence>
<evidence type="ECO:0000269" key="5">
    <source>
    </source>
</evidence>
<evidence type="ECO:0000305" key="6"/>
<evidence type="ECO:0000305" key="7">
    <source>
    </source>
</evidence>
<evidence type="ECO:0007744" key="8">
    <source>
        <dbReference type="PDB" id="6A9E"/>
    </source>
</evidence>
<evidence type="ECO:0007744" key="9">
    <source>
        <dbReference type="PDB" id="6A9J"/>
    </source>
</evidence>
<evidence type="ECO:0007829" key="10">
    <source>
        <dbReference type="PDB" id="6A9J"/>
    </source>
</evidence>
<reference key="1">
    <citation type="journal article" date="2002" name="Nature">
        <title>The genome sequence of Schizosaccharomyces pombe.</title>
        <authorList>
            <person name="Wood V."/>
            <person name="Gwilliam R."/>
            <person name="Rajandream M.A."/>
            <person name="Lyne M.H."/>
            <person name="Lyne R."/>
            <person name="Stewart A."/>
            <person name="Sgouros J.G."/>
            <person name="Peat N."/>
            <person name="Hayles J."/>
            <person name="Baker S.G."/>
            <person name="Basham D."/>
            <person name="Bowman S."/>
            <person name="Brooks K."/>
            <person name="Brown D."/>
            <person name="Brown S."/>
            <person name="Chillingworth T."/>
            <person name="Churcher C.M."/>
            <person name="Collins M."/>
            <person name="Connor R."/>
            <person name="Cronin A."/>
            <person name="Davis P."/>
            <person name="Feltwell T."/>
            <person name="Fraser A."/>
            <person name="Gentles S."/>
            <person name="Goble A."/>
            <person name="Hamlin N."/>
            <person name="Harris D.E."/>
            <person name="Hidalgo J."/>
            <person name="Hodgson G."/>
            <person name="Holroyd S."/>
            <person name="Hornsby T."/>
            <person name="Howarth S."/>
            <person name="Huckle E.J."/>
            <person name="Hunt S."/>
            <person name="Jagels K."/>
            <person name="James K.D."/>
            <person name="Jones L."/>
            <person name="Jones M."/>
            <person name="Leather S."/>
            <person name="McDonald S."/>
            <person name="McLean J."/>
            <person name="Mooney P."/>
            <person name="Moule S."/>
            <person name="Mungall K.L."/>
            <person name="Murphy L.D."/>
            <person name="Niblett D."/>
            <person name="Odell C."/>
            <person name="Oliver K."/>
            <person name="O'Neil S."/>
            <person name="Pearson D."/>
            <person name="Quail M.A."/>
            <person name="Rabbinowitsch E."/>
            <person name="Rutherford K.M."/>
            <person name="Rutter S."/>
            <person name="Saunders D."/>
            <person name="Seeger K."/>
            <person name="Sharp S."/>
            <person name="Skelton J."/>
            <person name="Simmonds M.N."/>
            <person name="Squares R."/>
            <person name="Squares S."/>
            <person name="Stevens K."/>
            <person name="Taylor K."/>
            <person name="Taylor R.G."/>
            <person name="Tivey A."/>
            <person name="Walsh S.V."/>
            <person name="Warren T."/>
            <person name="Whitehead S."/>
            <person name="Woodward J.R."/>
            <person name="Volckaert G."/>
            <person name="Aert R."/>
            <person name="Robben J."/>
            <person name="Grymonprez B."/>
            <person name="Weltjens I."/>
            <person name="Vanstreels E."/>
            <person name="Rieger M."/>
            <person name="Schaefer M."/>
            <person name="Mueller-Auer S."/>
            <person name="Gabel C."/>
            <person name="Fuchs M."/>
            <person name="Duesterhoeft A."/>
            <person name="Fritzc C."/>
            <person name="Holzer E."/>
            <person name="Moestl D."/>
            <person name="Hilbert H."/>
            <person name="Borzym K."/>
            <person name="Langer I."/>
            <person name="Beck A."/>
            <person name="Lehrach H."/>
            <person name="Reinhardt R."/>
            <person name="Pohl T.M."/>
            <person name="Eger P."/>
            <person name="Zimmermann W."/>
            <person name="Wedler H."/>
            <person name="Wambutt R."/>
            <person name="Purnelle B."/>
            <person name="Goffeau A."/>
            <person name="Cadieu E."/>
            <person name="Dreano S."/>
            <person name="Gloux S."/>
            <person name="Lelaure V."/>
            <person name="Mottier S."/>
            <person name="Galibert F."/>
            <person name="Aves S.J."/>
            <person name="Xiang Z."/>
            <person name="Hunt C."/>
            <person name="Moore K."/>
            <person name="Hurst S.M."/>
            <person name="Lucas M."/>
            <person name="Rochet M."/>
            <person name="Gaillardin C."/>
            <person name="Tallada V.A."/>
            <person name="Garzon A."/>
            <person name="Thode G."/>
            <person name="Daga R.R."/>
            <person name="Cruzado L."/>
            <person name="Jimenez J."/>
            <person name="Sanchez M."/>
            <person name="del Rey F."/>
            <person name="Benito J."/>
            <person name="Dominguez A."/>
            <person name="Revuelta J.L."/>
            <person name="Moreno S."/>
            <person name="Armstrong J."/>
            <person name="Forsburg S.L."/>
            <person name="Cerutti L."/>
            <person name="Lowe T."/>
            <person name="McCombie W.R."/>
            <person name="Paulsen I."/>
            <person name="Potashkin J."/>
            <person name="Shpakovski G.V."/>
            <person name="Ussery D."/>
            <person name="Barrell B.G."/>
            <person name="Nurse P."/>
        </authorList>
    </citation>
    <scope>NUCLEOTIDE SEQUENCE [LARGE SCALE GENOMIC DNA]</scope>
    <source>
        <strain>972 / ATCC 24843</strain>
    </source>
</reference>
<reference key="2">
    <citation type="journal article" date="2005" name="Curr. Biol.">
        <title>A large-scale screen in S. pombe identifies seven novel genes required for critical meiotic events.</title>
        <authorList>
            <person name="Martin-Castellanos C."/>
            <person name="Blanco M."/>
            <person name="Rozalen A.E."/>
            <person name="Perez-Hidalgo L."/>
            <person name="Garcia A.I."/>
            <person name="Conde F."/>
            <person name="Mata J."/>
            <person name="Ellermeier C."/>
            <person name="Davis L."/>
            <person name="San-Segundo P."/>
            <person name="Smith G.R."/>
            <person name="Moreno S."/>
        </authorList>
    </citation>
    <scope>FUNCTION IN SPORULATION</scope>
</reference>
<reference key="3">
    <citation type="journal article" date="2013" name="PLoS Genet.">
        <title>Global analysis of fission yeast mating genes reveals new autophagy factors.</title>
        <authorList>
            <person name="Sun L.L."/>
            <person name="Li M."/>
            <person name="Suo F."/>
            <person name="Liu X.M."/>
            <person name="Shen E.Z."/>
            <person name="Yang B."/>
            <person name="Dong M.Q."/>
            <person name="He W.Z."/>
            <person name="Du L.L."/>
        </authorList>
    </citation>
    <scope>DISRUPTION PHENOTYPE</scope>
    <scope>SUBCELLULAR LOCATION</scope>
</reference>
<reference evidence="8 9" key="4">
    <citation type="journal article" date="2019" name="Nat. Struct. Mol. Biol.">
        <title>Atg2 mediates direct lipid transfer between membranes for autophagosome formation.</title>
        <authorList>
            <person name="Osawa T."/>
            <person name="Kotani T."/>
            <person name="Kawaoka T."/>
            <person name="Hirata E."/>
            <person name="Suzuki K."/>
            <person name="Nakatogawa H."/>
            <person name="Ohsumi Y."/>
            <person name="Noda N.N."/>
        </authorList>
    </citation>
    <scope>X-RAY CRYSTALLOGRAPHY (2.70 ANGSTROMS) OF 21-240</scope>
    <scope>FUNCTION</scope>
    <scope>CATALYTIC ACTIVITY</scope>
    <scope>DOMAIN</scope>
</reference>